<gene>
    <name evidence="1" type="primary">pyrE</name>
    <name type="ordered locus">Sde_3672</name>
</gene>
<feature type="chain" id="PRO_1000066291" description="Orotate phosphoribosyltransferase">
    <location>
        <begin position="1"/>
        <end position="213"/>
    </location>
</feature>
<feature type="binding site" description="in other chain" evidence="1">
    <location>
        <position position="26"/>
    </location>
    <ligand>
        <name>5-phospho-alpha-D-ribose 1-diphosphate</name>
        <dbReference type="ChEBI" id="CHEBI:58017"/>
        <note>ligand shared between dimeric partners</note>
    </ligand>
</feature>
<feature type="binding site" evidence="1">
    <location>
        <begin position="34"/>
        <end position="35"/>
    </location>
    <ligand>
        <name>orotate</name>
        <dbReference type="ChEBI" id="CHEBI:30839"/>
    </ligand>
</feature>
<feature type="binding site" description="in other chain" evidence="1">
    <location>
        <begin position="72"/>
        <end position="73"/>
    </location>
    <ligand>
        <name>5-phospho-alpha-D-ribose 1-diphosphate</name>
        <dbReference type="ChEBI" id="CHEBI:58017"/>
        <note>ligand shared between dimeric partners</note>
    </ligand>
</feature>
<feature type="binding site" evidence="1">
    <location>
        <position position="99"/>
    </location>
    <ligand>
        <name>5-phospho-alpha-D-ribose 1-diphosphate</name>
        <dbReference type="ChEBI" id="CHEBI:58017"/>
        <note>ligand shared between dimeric partners</note>
    </ligand>
</feature>
<feature type="binding site" description="in other chain" evidence="1">
    <location>
        <position position="100"/>
    </location>
    <ligand>
        <name>5-phospho-alpha-D-ribose 1-diphosphate</name>
        <dbReference type="ChEBI" id="CHEBI:58017"/>
        <note>ligand shared between dimeric partners</note>
    </ligand>
</feature>
<feature type="binding site" evidence="1">
    <location>
        <position position="103"/>
    </location>
    <ligand>
        <name>5-phospho-alpha-D-ribose 1-diphosphate</name>
        <dbReference type="ChEBI" id="CHEBI:58017"/>
        <note>ligand shared between dimeric partners</note>
    </ligand>
</feature>
<feature type="binding site" evidence="1">
    <location>
        <position position="105"/>
    </location>
    <ligand>
        <name>5-phospho-alpha-D-ribose 1-diphosphate</name>
        <dbReference type="ChEBI" id="CHEBI:58017"/>
        <note>ligand shared between dimeric partners</note>
    </ligand>
</feature>
<feature type="binding site" description="in other chain" evidence="1">
    <location>
        <begin position="124"/>
        <end position="132"/>
    </location>
    <ligand>
        <name>5-phospho-alpha-D-ribose 1-diphosphate</name>
        <dbReference type="ChEBI" id="CHEBI:58017"/>
        <note>ligand shared between dimeric partners</note>
    </ligand>
</feature>
<feature type="binding site" evidence="1">
    <location>
        <position position="128"/>
    </location>
    <ligand>
        <name>orotate</name>
        <dbReference type="ChEBI" id="CHEBI:30839"/>
    </ligand>
</feature>
<feature type="binding site" evidence="1">
    <location>
        <position position="156"/>
    </location>
    <ligand>
        <name>orotate</name>
        <dbReference type="ChEBI" id="CHEBI:30839"/>
    </ligand>
</feature>
<sequence length="213" mass="22874">MQAYQKDFIQLALKAQALKFGEFTLKSGRVSPYFFNAGQFQTGSALASLGRFYAQALVDAGVEFDMIFGPAYKGIPLATTTATALADHHQKDMPFAYNRKEVKAHGEGGTLVGAPIKGRVAIIDDVITAGTAVREVLSLIDAAGAKPAAIVVGLNRQEKGQGELSAIQELEQETGVPVISIINLNHVLQYLETQGDSENLAKVTAYRQQYGVE</sequence>
<comment type="function">
    <text evidence="1">Catalyzes the transfer of a ribosyl phosphate group from 5-phosphoribose 1-diphosphate to orotate, leading to the formation of orotidine monophosphate (OMP).</text>
</comment>
<comment type="catalytic activity">
    <reaction evidence="1">
        <text>orotidine 5'-phosphate + diphosphate = orotate + 5-phospho-alpha-D-ribose 1-diphosphate</text>
        <dbReference type="Rhea" id="RHEA:10380"/>
        <dbReference type="ChEBI" id="CHEBI:30839"/>
        <dbReference type="ChEBI" id="CHEBI:33019"/>
        <dbReference type="ChEBI" id="CHEBI:57538"/>
        <dbReference type="ChEBI" id="CHEBI:58017"/>
        <dbReference type="EC" id="2.4.2.10"/>
    </reaction>
</comment>
<comment type="cofactor">
    <cofactor evidence="1">
        <name>Mg(2+)</name>
        <dbReference type="ChEBI" id="CHEBI:18420"/>
    </cofactor>
</comment>
<comment type="pathway">
    <text evidence="1">Pyrimidine metabolism; UMP biosynthesis via de novo pathway; UMP from orotate: step 1/2.</text>
</comment>
<comment type="subunit">
    <text evidence="1">Homodimer.</text>
</comment>
<comment type="similarity">
    <text evidence="1">Belongs to the purine/pyrimidine phosphoribosyltransferase family. PyrE subfamily.</text>
</comment>
<organism>
    <name type="scientific">Saccharophagus degradans (strain 2-40 / ATCC 43961 / DSM 17024)</name>
    <dbReference type="NCBI Taxonomy" id="203122"/>
    <lineage>
        <taxon>Bacteria</taxon>
        <taxon>Pseudomonadati</taxon>
        <taxon>Pseudomonadota</taxon>
        <taxon>Gammaproteobacteria</taxon>
        <taxon>Cellvibrionales</taxon>
        <taxon>Cellvibrionaceae</taxon>
        <taxon>Saccharophagus</taxon>
    </lineage>
</organism>
<reference key="1">
    <citation type="journal article" date="2008" name="PLoS Genet.">
        <title>Complete genome sequence of the complex carbohydrate-degrading marine bacterium, Saccharophagus degradans strain 2-40 T.</title>
        <authorList>
            <person name="Weiner R.M."/>
            <person name="Taylor L.E. II"/>
            <person name="Henrissat B."/>
            <person name="Hauser L."/>
            <person name="Land M."/>
            <person name="Coutinho P.M."/>
            <person name="Rancurel C."/>
            <person name="Saunders E.H."/>
            <person name="Longmire A.G."/>
            <person name="Zhang H."/>
            <person name="Bayer E.A."/>
            <person name="Gilbert H.J."/>
            <person name="Larimer F."/>
            <person name="Zhulin I.B."/>
            <person name="Ekborg N.A."/>
            <person name="Lamed R."/>
            <person name="Richardson P.M."/>
            <person name="Borovok I."/>
            <person name="Hutcheson S."/>
        </authorList>
    </citation>
    <scope>NUCLEOTIDE SEQUENCE [LARGE SCALE GENOMIC DNA]</scope>
    <source>
        <strain>2-40 / ATCC 43961 / DSM 17024</strain>
    </source>
</reference>
<keyword id="KW-0328">Glycosyltransferase</keyword>
<keyword id="KW-0460">Magnesium</keyword>
<keyword id="KW-0665">Pyrimidine biosynthesis</keyword>
<keyword id="KW-1185">Reference proteome</keyword>
<keyword id="KW-0808">Transferase</keyword>
<evidence type="ECO:0000255" key="1">
    <source>
        <dbReference type="HAMAP-Rule" id="MF_01208"/>
    </source>
</evidence>
<name>PYRE_SACD2</name>
<protein>
    <recommendedName>
        <fullName evidence="1">Orotate phosphoribosyltransferase</fullName>
        <shortName evidence="1">OPRT</shortName>
        <shortName evidence="1">OPRTase</shortName>
        <ecNumber evidence="1">2.4.2.10</ecNumber>
    </recommendedName>
</protein>
<dbReference type="EC" id="2.4.2.10" evidence="1"/>
<dbReference type="EMBL" id="CP000282">
    <property type="protein sequence ID" value="ABD82927.1"/>
    <property type="molecule type" value="Genomic_DNA"/>
</dbReference>
<dbReference type="RefSeq" id="WP_011470142.1">
    <property type="nucleotide sequence ID" value="NC_007912.1"/>
</dbReference>
<dbReference type="SMR" id="Q21EF2"/>
<dbReference type="STRING" id="203122.Sde_3672"/>
<dbReference type="GeneID" id="98615282"/>
<dbReference type="KEGG" id="sde:Sde_3672"/>
<dbReference type="eggNOG" id="COG0461">
    <property type="taxonomic scope" value="Bacteria"/>
</dbReference>
<dbReference type="HOGENOM" id="CLU_074878_0_1_6"/>
<dbReference type="OrthoDB" id="9779060at2"/>
<dbReference type="UniPathway" id="UPA00070">
    <property type="reaction ID" value="UER00119"/>
</dbReference>
<dbReference type="Proteomes" id="UP000001947">
    <property type="component" value="Chromosome"/>
</dbReference>
<dbReference type="GO" id="GO:0005737">
    <property type="term" value="C:cytoplasm"/>
    <property type="evidence" value="ECO:0007669"/>
    <property type="project" value="TreeGrafter"/>
</dbReference>
<dbReference type="GO" id="GO:0000287">
    <property type="term" value="F:magnesium ion binding"/>
    <property type="evidence" value="ECO:0007669"/>
    <property type="project" value="UniProtKB-UniRule"/>
</dbReference>
<dbReference type="GO" id="GO:0004588">
    <property type="term" value="F:orotate phosphoribosyltransferase activity"/>
    <property type="evidence" value="ECO:0007669"/>
    <property type="project" value="UniProtKB-UniRule"/>
</dbReference>
<dbReference type="GO" id="GO:0006207">
    <property type="term" value="P:'de novo' pyrimidine nucleobase biosynthetic process"/>
    <property type="evidence" value="ECO:0007669"/>
    <property type="project" value="TreeGrafter"/>
</dbReference>
<dbReference type="GO" id="GO:0044205">
    <property type="term" value="P:'de novo' UMP biosynthetic process"/>
    <property type="evidence" value="ECO:0007669"/>
    <property type="project" value="UniProtKB-UniRule"/>
</dbReference>
<dbReference type="GO" id="GO:0046132">
    <property type="term" value="P:pyrimidine ribonucleoside biosynthetic process"/>
    <property type="evidence" value="ECO:0007669"/>
    <property type="project" value="TreeGrafter"/>
</dbReference>
<dbReference type="CDD" id="cd06223">
    <property type="entry name" value="PRTases_typeI"/>
    <property type="match status" value="1"/>
</dbReference>
<dbReference type="FunFam" id="3.40.50.2020:FF:000008">
    <property type="entry name" value="Orotate phosphoribosyltransferase"/>
    <property type="match status" value="1"/>
</dbReference>
<dbReference type="Gene3D" id="3.40.50.2020">
    <property type="match status" value="1"/>
</dbReference>
<dbReference type="HAMAP" id="MF_01208">
    <property type="entry name" value="PyrE"/>
    <property type="match status" value="1"/>
</dbReference>
<dbReference type="InterPro" id="IPR023031">
    <property type="entry name" value="OPRT"/>
</dbReference>
<dbReference type="InterPro" id="IPR004467">
    <property type="entry name" value="Or_phspho_trans_dom"/>
</dbReference>
<dbReference type="InterPro" id="IPR000836">
    <property type="entry name" value="PRibTrfase_dom"/>
</dbReference>
<dbReference type="InterPro" id="IPR029057">
    <property type="entry name" value="PRTase-like"/>
</dbReference>
<dbReference type="NCBIfam" id="TIGR00336">
    <property type="entry name" value="pyrE"/>
    <property type="match status" value="1"/>
</dbReference>
<dbReference type="PANTHER" id="PTHR46683">
    <property type="entry name" value="OROTATE PHOSPHORIBOSYLTRANSFERASE 1-RELATED"/>
    <property type="match status" value="1"/>
</dbReference>
<dbReference type="PANTHER" id="PTHR46683:SF1">
    <property type="entry name" value="OROTATE PHOSPHORIBOSYLTRANSFERASE 1-RELATED"/>
    <property type="match status" value="1"/>
</dbReference>
<dbReference type="Pfam" id="PF00156">
    <property type="entry name" value="Pribosyltran"/>
    <property type="match status" value="1"/>
</dbReference>
<dbReference type="SUPFAM" id="SSF53271">
    <property type="entry name" value="PRTase-like"/>
    <property type="match status" value="1"/>
</dbReference>
<proteinExistence type="inferred from homology"/>
<accession>Q21EF2</accession>